<sequence length="143" mass="15815">MTLERTLSIIKPDAVGNNHIGEIIARFEKAGLRIVAAKMKQLDRKDAEGFYAVHKGRPFFEDLVGFMTTGPVMIMVLEGENAINKNREIMGATDPKKAAPGTIRADFAQTIDENAVHGSDAAETAKTEIEYFFKSQDVCARKR</sequence>
<accession>Q6MEA7</accession>
<protein>
    <recommendedName>
        <fullName evidence="1">Nucleoside diphosphate kinase 2</fullName>
        <shortName evidence="1">NDK 2</shortName>
        <shortName evidence="1">NDP kinase 2</shortName>
        <ecNumber evidence="1">2.7.4.6</ecNumber>
    </recommendedName>
    <alternativeName>
        <fullName evidence="1">Nucleoside-2-P kinase 2</fullName>
    </alternativeName>
</protein>
<dbReference type="EC" id="2.7.4.6" evidence="1"/>
<dbReference type="EMBL" id="BX908798">
    <property type="protein sequence ID" value="CAF23092.1"/>
    <property type="molecule type" value="Genomic_DNA"/>
</dbReference>
<dbReference type="RefSeq" id="WP_011174918.1">
    <property type="nucleotide sequence ID" value="NC_005861.2"/>
</dbReference>
<dbReference type="SMR" id="Q6MEA7"/>
<dbReference type="STRING" id="264201.pc0368"/>
<dbReference type="KEGG" id="pcu:PC_RS01810"/>
<dbReference type="eggNOG" id="COG0105">
    <property type="taxonomic scope" value="Bacteria"/>
</dbReference>
<dbReference type="HOGENOM" id="CLU_060216_8_1_0"/>
<dbReference type="OrthoDB" id="9801161at2"/>
<dbReference type="Proteomes" id="UP000000529">
    <property type="component" value="Chromosome"/>
</dbReference>
<dbReference type="GO" id="GO:0005737">
    <property type="term" value="C:cytoplasm"/>
    <property type="evidence" value="ECO:0007669"/>
    <property type="project" value="UniProtKB-SubCell"/>
</dbReference>
<dbReference type="GO" id="GO:0005524">
    <property type="term" value="F:ATP binding"/>
    <property type="evidence" value="ECO:0007669"/>
    <property type="project" value="UniProtKB-UniRule"/>
</dbReference>
<dbReference type="GO" id="GO:0046872">
    <property type="term" value="F:metal ion binding"/>
    <property type="evidence" value="ECO:0007669"/>
    <property type="project" value="UniProtKB-KW"/>
</dbReference>
<dbReference type="GO" id="GO:0004550">
    <property type="term" value="F:nucleoside diphosphate kinase activity"/>
    <property type="evidence" value="ECO:0007669"/>
    <property type="project" value="UniProtKB-UniRule"/>
</dbReference>
<dbReference type="GO" id="GO:0006241">
    <property type="term" value="P:CTP biosynthetic process"/>
    <property type="evidence" value="ECO:0007669"/>
    <property type="project" value="UniProtKB-UniRule"/>
</dbReference>
<dbReference type="GO" id="GO:0006183">
    <property type="term" value="P:GTP biosynthetic process"/>
    <property type="evidence" value="ECO:0007669"/>
    <property type="project" value="UniProtKB-UniRule"/>
</dbReference>
<dbReference type="GO" id="GO:0006228">
    <property type="term" value="P:UTP biosynthetic process"/>
    <property type="evidence" value="ECO:0007669"/>
    <property type="project" value="UniProtKB-UniRule"/>
</dbReference>
<dbReference type="CDD" id="cd04413">
    <property type="entry name" value="NDPk_I"/>
    <property type="match status" value="1"/>
</dbReference>
<dbReference type="FunFam" id="3.30.70.141:FF:000001">
    <property type="entry name" value="Nucleoside diphosphate kinase"/>
    <property type="match status" value="1"/>
</dbReference>
<dbReference type="Gene3D" id="3.30.70.141">
    <property type="entry name" value="Nucleoside diphosphate kinase-like domain"/>
    <property type="match status" value="1"/>
</dbReference>
<dbReference type="HAMAP" id="MF_00451">
    <property type="entry name" value="NDP_kinase"/>
    <property type="match status" value="1"/>
</dbReference>
<dbReference type="InterPro" id="IPR034907">
    <property type="entry name" value="NDK-like_dom"/>
</dbReference>
<dbReference type="InterPro" id="IPR036850">
    <property type="entry name" value="NDK-like_dom_sf"/>
</dbReference>
<dbReference type="InterPro" id="IPR001564">
    <property type="entry name" value="Nucleoside_diP_kinase"/>
</dbReference>
<dbReference type="NCBIfam" id="NF001908">
    <property type="entry name" value="PRK00668.1"/>
    <property type="match status" value="1"/>
</dbReference>
<dbReference type="PANTHER" id="PTHR46161">
    <property type="entry name" value="NUCLEOSIDE DIPHOSPHATE KINASE"/>
    <property type="match status" value="1"/>
</dbReference>
<dbReference type="PANTHER" id="PTHR46161:SF3">
    <property type="entry name" value="NUCLEOSIDE DIPHOSPHATE KINASE DDB_G0292928-RELATED"/>
    <property type="match status" value="1"/>
</dbReference>
<dbReference type="Pfam" id="PF00334">
    <property type="entry name" value="NDK"/>
    <property type="match status" value="1"/>
</dbReference>
<dbReference type="PRINTS" id="PR01243">
    <property type="entry name" value="NUCDPKINASE"/>
</dbReference>
<dbReference type="SMART" id="SM00562">
    <property type="entry name" value="NDK"/>
    <property type="match status" value="1"/>
</dbReference>
<dbReference type="SUPFAM" id="SSF54919">
    <property type="entry name" value="Nucleoside diphosphate kinase, NDK"/>
    <property type="match status" value="1"/>
</dbReference>
<dbReference type="PROSITE" id="PS51374">
    <property type="entry name" value="NDPK_LIKE"/>
    <property type="match status" value="1"/>
</dbReference>
<gene>
    <name evidence="1" type="primary">ndk2</name>
    <name type="ordered locus">pc0368</name>
</gene>
<name>NDK2_PARUW</name>
<feature type="chain" id="PRO_0000226567" description="Nucleoside diphosphate kinase 2">
    <location>
        <begin position="1"/>
        <end position="143"/>
    </location>
</feature>
<feature type="active site" description="Pros-phosphohistidine intermediate" evidence="1">
    <location>
        <position position="117"/>
    </location>
</feature>
<feature type="binding site" evidence="1">
    <location>
        <position position="11"/>
    </location>
    <ligand>
        <name>ATP</name>
        <dbReference type="ChEBI" id="CHEBI:30616"/>
    </ligand>
</feature>
<feature type="binding site" evidence="1">
    <location>
        <position position="59"/>
    </location>
    <ligand>
        <name>ATP</name>
        <dbReference type="ChEBI" id="CHEBI:30616"/>
    </ligand>
</feature>
<feature type="binding site" evidence="1">
    <location>
        <position position="87"/>
    </location>
    <ligand>
        <name>ATP</name>
        <dbReference type="ChEBI" id="CHEBI:30616"/>
    </ligand>
</feature>
<feature type="binding site" evidence="1">
    <location>
        <position position="93"/>
    </location>
    <ligand>
        <name>ATP</name>
        <dbReference type="ChEBI" id="CHEBI:30616"/>
    </ligand>
</feature>
<feature type="binding site" evidence="1">
    <location>
        <position position="104"/>
    </location>
    <ligand>
        <name>ATP</name>
        <dbReference type="ChEBI" id="CHEBI:30616"/>
    </ligand>
</feature>
<feature type="binding site" evidence="1">
    <location>
        <position position="114"/>
    </location>
    <ligand>
        <name>ATP</name>
        <dbReference type="ChEBI" id="CHEBI:30616"/>
    </ligand>
</feature>
<evidence type="ECO:0000255" key="1">
    <source>
        <dbReference type="HAMAP-Rule" id="MF_00451"/>
    </source>
</evidence>
<proteinExistence type="inferred from homology"/>
<comment type="function">
    <text evidence="1">Major role in the synthesis of nucleoside triphosphates other than ATP. The ATP gamma phosphate is transferred to the NDP beta phosphate via a ping-pong mechanism, using a phosphorylated active-site intermediate.</text>
</comment>
<comment type="catalytic activity">
    <reaction evidence="1">
        <text>a 2'-deoxyribonucleoside 5'-diphosphate + ATP = a 2'-deoxyribonucleoside 5'-triphosphate + ADP</text>
        <dbReference type="Rhea" id="RHEA:44640"/>
        <dbReference type="ChEBI" id="CHEBI:30616"/>
        <dbReference type="ChEBI" id="CHEBI:61560"/>
        <dbReference type="ChEBI" id="CHEBI:73316"/>
        <dbReference type="ChEBI" id="CHEBI:456216"/>
        <dbReference type="EC" id="2.7.4.6"/>
    </reaction>
</comment>
<comment type="catalytic activity">
    <reaction evidence="1">
        <text>a ribonucleoside 5'-diphosphate + ATP = a ribonucleoside 5'-triphosphate + ADP</text>
        <dbReference type="Rhea" id="RHEA:18113"/>
        <dbReference type="ChEBI" id="CHEBI:30616"/>
        <dbReference type="ChEBI" id="CHEBI:57930"/>
        <dbReference type="ChEBI" id="CHEBI:61557"/>
        <dbReference type="ChEBI" id="CHEBI:456216"/>
        <dbReference type="EC" id="2.7.4.6"/>
    </reaction>
</comment>
<comment type="cofactor">
    <cofactor evidence="1">
        <name>Mg(2+)</name>
        <dbReference type="ChEBI" id="CHEBI:18420"/>
    </cofactor>
</comment>
<comment type="subunit">
    <text evidence="1">Homotetramer.</text>
</comment>
<comment type="subcellular location">
    <subcellularLocation>
        <location evidence="1">Cytoplasm</location>
    </subcellularLocation>
</comment>
<comment type="similarity">
    <text evidence="1">Belongs to the NDK family.</text>
</comment>
<organism>
    <name type="scientific">Protochlamydia amoebophila (strain UWE25)</name>
    <dbReference type="NCBI Taxonomy" id="264201"/>
    <lineage>
        <taxon>Bacteria</taxon>
        <taxon>Pseudomonadati</taxon>
        <taxon>Chlamydiota</taxon>
        <taxon>Chlamydiia</taxon>
        <taxon>Parachlamydiales</taxon>
        <taxon>Parachlamydiaceae</taxon>
        <taxon>Candidatus Protochlamydia</taxon>
    </lineage>
</organism>
<keyword id="KW-0067">ATP-binding</keyword>
<keyword id="KW-0963">Cytoplasm</keyword>
<keyword id="KW-0418">Kinase</keyword>
<keyword id="KW-0460">Magnesium</keyword>
<keyword id="KW-0479">Metal-binding</keyword>
<keyword id="KW-0546">Nucleotide metabolism</keyword>
<keyword id="KW-0547">Nucleotide-binding</keyword>
<keyword id="KW-0597">Phosphoprotein</keyword>
<keyword id="KW-1185">Reference proteome</keyword>
<keyword id="KW-0808">Transferase</keyword>
<reference key="1">
    <citation type="journal article" date="2004" name="Science">
        <title>Illuminating the evolutionary history of chlamydiae.</title>
        <authorList>
            <person name="Horn M."/>
            <person name="Collingro A."/>
            <person name="Schmitz-Esser S."/>
            <person name="Beier C.L."/>
            <person name="Purkhold U."/>
            <person name="Fartmann B."/>
            <person name="Brandt P."/>
            <person name="Nyakatura G.J."/>
            <person name="Droege M."/>
            <person name="Frishman D."/>
            <person name="Rattei T."/>
            <person name="Mewes H.-W."/>
            <person name="Wagner M."/>
        </authorList>
    </citation>
    <scope>NUCLEOTIDE SEQUENCE [LARGE SCALE GENOMIC DNA]</scope>
    <source>
        <strain>UWE25</strain>
    </source>
</reference>